<dbReference type="RefSeq" id="NP_001076038.1">
    <property type="nucleotide sequence ID" value="NM_001082569.3"/>
</dbReference>
<dbReference type="SMR" id="Q5DRB0"/>
<dbReference type="FunCoup" id="Q5DRB0">
    <property type="interactions" value="64"/>
</dbReference>
<dbReference type="GlyCosmos" id="Q5DRB0">
    <property type="glycosylation" value="5 sites, No reported glycans"/>
</dbReference>
<dbReference type="GeneID" id="100034680"/>
<dbReference type="KEGG" id="ptr:100034680"/>
<dbReference type="CTD" id="56104"/>
<dbReference type="InParanoid" id="Q5DRB0"/>
<dbReference type="OrthoDB" id="10275at9604"/>
<dbReference type="Proteomes" id="UP000002277">
    <property type="component" value="Unplaced"/>
</dbReference>
<dbReference type="GO" id="GO:0005886">
    <property type="term" value="C:plasma membrane"/>
    <property type="evidence" value="ECO:0000318"/>
    <property type="project" value="GO_Central"/>
</dbReference>
<dbReference type="GO" id="GO:0005509">
    <property type="term" value="F:calcium ion binding"/>
    <property type="evidence" value="ECO:0007669"/>
    <property type="project" value="InterPro"/>
</dbReference>
<dbReference type="GO" id="GO:0007155">
    <property type="term" value="P:cell adhesion"/>
    <property type="evidence" value="ECO:0000318"/>
    <property type="project" value="GO_Central"/>
</dbReference>
<dbReference type="GO" id="GO:0007156">
    <property type="term" value="P:homophilic cell adhesion via plasma membrane adhesion molecules"/>
    <property type="evidence" value="ECO:0007669"/>
    <property type="project" value="InterPro"/>
</dbReference>
<dbReference type="GO" id="GO:0007399">
    <property type="term" value="P:nervous system development"/>
    <property type="evidence" value="ECO:0007669"/>
    <property type="project" value="UniProtKB-ARBA"/>
</dbReference>
<dbReference type="CDD" id="cd11304">
    <property type="entry name" value="Cadherin_repeat"/>
    <property type="match status" value="6"/>
</dbReference>
<dbReference type="FunFam" id="2.60.40.60:FF:000004">
    <property type="entry name" value="Protocadherin 1 gamma 2"/>
    <property type="match status" value="1"/>
</dbReference>
<dbReference type="FunFam" id="2.60.40.60:FF:000001">
    <property type="entry name" value="Protocadherin alpha 2"/>
    <property type="match status" value="1"/>
</dbReference>
<dbReference type="FunFam" id="2.60.40.60:FF:000002">
    <property type="entry name" value="Protocadherin alpha 2"/>
    <property type="match status" value="1"/>
</dbReference>
<dbReference type="FunFam" id="2.60.40.60:FF:000006">
    <property type="entry name" value="Protocadherin alpha 2"/>
    <property type="match status" value="1"/>
</dbReference>
<dbReference type="FunFam" id="2.60.40.60:FF:000129">
    <property type="entry name" value="protocadherin alpha-C2 isoform X1"/>
    <property type="match status" value="1"/>
</dbReference>
<dbReference type="FunFam" id="2.60.40.60:FF:000018">
    <property type="entry name" value="Protocadherin gamma c3"/>
    <property type="match status" value="1"/>
</dbReference>
<dbReference type="Gene3D" id="2.60.40.60">
    <property type="entry name" value="Cadherins"/>
    <property type="match status" value="6"/>
</dbReference>
<dbReference type="InterPro" id="IPR002126">
    <property type="entry name" value="Cadherin-like_dom"/>
</dbReference>
<dbReference type="InterPro" id="IPR015919">
    <property type="entry name" value="Cadherin-like_sf"/>
</dbReference>
<dbReference type="InterPro" id="IPR032455">
    <property type="entry name" value="Cadherin_C"/>
</dbReference>
<dbReference type="InterPro" id="IPR031904">
    <property type="entry name" value="Cadherin_CBD"/>
</dbReference>
<dbReference type="InterPro" id="IPR020894">
    <property type="entry name" value="Cadherin_CS"/>
</dbReference>
<dbReference type="InterPro" id="IPR013164">
    <property type="entry name" value="Cadherin_N"/>
</dbReference>
<dbReference type="InterPro" id="IPR050174">
    <property type="entry name" value="Protocadherin/Cadherin-CA"/>
</dbReference>
<dbReference type="PANTHER" id="PTHR24028">
    <property type="entry name" value="CADHERIN-87A"/>
    <property type="match status" value="1"/>
</dbReference>
<dbReference type="PANTHER" id="PTHR24028:SF106">
    <property type="entry name" value="PROTOCADHERIN GAMMA-B1"/>
    <property type="match status" value="1"/>
</dbReference>
<dbReference type="Pfam" id="PF00028">
    <property type="entry name" value="Cadherin"/>
    <property type="match status" value="5"/>
</dbReference>
<dbReference type="Pfam" id="PF08266">
    <property type="entry name" value="Cadherin_2"/>
    <property type="match status" value="1"/>
</dbReference>
<dbReference type="Pfam" id="PF16492">
    <property type="entry name" value="Cadherin_C_2"/>
    <property type="match status" value="1"/>
</dbReference>
<dbReference type="Pfam" id="PF15974">
    <property type="entry name" value="Cadherin_tail"/>
    <property type="match status" value="1"/>
</dbReference>
<dbReference type="PRINTS" id="PR00205">
    <property type="entry name" value="CADHERIN"/>
</dbReference>
<dbReference type="SMART" id="SM00112">
    <property type="entry name" value="CA"/>
    <property type="match status" value="6"/>
</dbReference>
<dbReference type="SUPFAM" id="SSF49313">
    <property type="entry name" value="Cadherin-like"/>
    <property type="match status" value="6"/>
</dbReference>
<dbReference type="PROSITE" id="PS00232">
    <property type="entry name" value="CADHERIN_1"/>
    <property type="match status" value="5"/>
</dbReference>
<dbReference type="PROSITE" id="PS50268">
    <property type="entry name" value="CADHERIN_2"/>
    <property type="match status" value="6"/>
</dbReference>
<keyword id="KW-0106">Calcium</keyword>
<keyword id="KW-0130">Cell adhesion</keyword>
<keyword id="KW-1003">Cell membrane</keyword>
<keyword id="KW-0325">Glycoprotein</keyword>
<keyword id="KW-0472">Membrane</keyword>
<keyword id="KW-1185">Reference proteome</keyword>
<keyword id="KW-0677">Repeat</keyword>
<keyword id="KW-0732">Signal</keyword>
<keyword id="KW-0812">Transmembrane</keyword>
<keyword id="KW-1133">Transmembrane helix</keyword>
<proteinExistence type="inferred from homology"/>
<sequence>MRRAREAEMMKSQVLFPFLLSLFCGAISQQIRYTIPEELANGSRVGNLAKDLGLSVRELPTRKLRVSAEDYFNVSLESGDLLVNGRIDREKICGRKLECALEFETVTENPMNVFHVVVVIQDINDNAPRFVAKGIDLEICESALPGVKFSLDSAQDADVEGNSLKLYTINPNQYFSLSTKESPDGSKYPELLLEKPLDREHQSSHRLILTAMDGGDPPLSGTTHIWIRVTDANDNAPVFSQEVYRVSLQENVPWGTSVLRVMATDQDEGINAEITYAFLNSPISTSLFNLNPNTGDITTNGTLDFEETSRYVLSVEAKDGGVHTAHCNVQIEIVDENDNAPEVTFVSFSNQIPEDSDLGTVIALIKVRDKDSGQNGMVTCYIQEEVPFKLESTSKNYYKLVIAGALNREQTADYNVTIIATDKGKPALSSRTSITLHISDINDNAPVFHQASYVVHVSENNPPGASIAQVSASDPDLGPNGRVSYSILASDLEPRELLSYVSVSPQSGVVFAQRAFDHEQLRAFELTLQARDQGSPALSANVSLRVLVGDLNDNAPRVLYPALGPDGSALFDMVPRAAEPGYLVTKVVAVDADSGHNAWLSYHVLQASEPGLFSLGLRTGEVRTARALGDRDAARQRLLVAVRDGGQPPLSATATLHLIFADSLQEVLPDLSDRPEPSDPQTELQFYLVVALALISVLFLLAVILAIALRLRRSSSLDTEGCFQTGLCSKSGPGVPPNHSEGTLPYSYNLCVASHSAKTEFNFLNLTPEMAPPQDLLCDDPSMVVCASNEDHKIAYDPSLSSHQAPPNTDWRFSQAQRPGTSGSQNGDDTGTWPNNQFDTEMLQAMILASASEAADGSSTLGGGAGTMGLSARYGPQFTLQHVPDYRQNVYIPGSNATLTNAAGKRDGKAPAGGNGNKKKSGKKEKK</sequence>
<protein>
    <recommendedName>
        <fullName>Protocadherin gamma-B1</fullName>
        <shortName>PCDH-gamma-B1</shortName>
    </recommendedName>
</protein>
<gene>
    <name type="primary">PCDHGB1</name>
</gene>
<comment type="function">
    <text>Potential calcium-dependent cell-adhesion protein. May be involved in the establishment and maintenance of specific neuronal connections in the brain.</text>
</comment>
<comment type="subcellular location">
    <subcellularLocation>
        <location evidence="1">Cell membrane</location>
        <topology evidence="1">Single-pass type I membrane protein</topology>
    </subcellularLocation>
</comment>
<evidence type="ECO:0000250" key="1"/>
<evidence type="ECO:0000255" key="2"/>
<evidence type="ECO:0000255" key="3">
    <source>
        <dbReference type="PROSITE-ProRule" id="PRU00043"/>
    </source>
</evidence>
<evidence type="ECO:0000256" key="4">
    <source>
        <dbReference type="SAM" id="MobiDB-lite"/>
    </source>
</evidence>
<reference key="1">
    <citation type="journal article" date="2005" name="Nature">
        <title>Initial sequence of the chimpanzee genome and comparison with the human genome.</title>
        <authorList>
            <consortium name="Chimpanzee sequencing and analysis consortium"/>
        </authorList>
    </citation>
    <scope>NUCLEOTIDE SEQUENCE [LARGE SCALE GENOMIC DNA]</scope>
</reference>
<reference key="2">
    <citation type="journal article" date="2005" name="Genetics">
        <title>Comparative genomics and diversifying selection of the clustered vertebrate protocadherin genes.</title>
        <authorList>
            <person name="Wu Q."/>
        </authorList>
    </citation>
    <scope>IDENTIFICATION</scope>
</reference>
<accession>Q5DRB0</accession>
<name>PCDGD_PANTR</name>
<feature type="signal peptide" evidence="2">
    <location>
        <begin position="1"/>
        <end position="28"/>
    </location>
</feature>
<feature type="chain" id="PRO_0000003973" description="Protocadherin gamma-B1">
    <location>
        <begin position="29"/>
        <end position="927"/>
    </location>
</feature>
<feature type="topological domain" description="Extracellular" evidence="2">
    <location>
        <begin position="29"/>
        <end position="687"/>
    </location>
</feature>
<feature type="transmembrane region" description="Helical" evidence="2">
    <location>
        <begin position="688"/>
        <end position="708"/>
    </location>
</feature>
<feature type="topological domain" description="Cytoplasmic" evidence="2">
    <location>
        <begin position="709"/>
        <end position="927"/>
    </location>
</feature>
<feature type="domain" description="Cadherin 1" evidence="3">
    <location>
        <begin position="29"/>
        <end position="130"/>
    </location>
</feature>
<feature type="domain" description="Cadherin 2" evidence="3">
    <location>
        <begin position="131"/>
        <end position="239"/>
    </location>
</feature>
<feature type="domain" description="Cadherin 3" evidence="3">
    <location>
        <begin position="240"/>
        <end position="343"/>
    </location>
</feature>
<feature type="domain" description="Cadherin 4" evidence="3">
    <location>
        <begin position="344"/>
        <end position="448"/>
    </location>
</feature>
<feature type="domain" description="Cadherin 5" evidence="3">
    <location>
        <begin position="449"/>
        <end position="558"/>
    </location>
</feature>
<feature type="domain" description="Cadherin 6" evidence="3">
    <location>
        <begin position="566"/>
        <end position="671"/>
    </location>
</feature>
<feature type="region of interest" description="Disordered" evidence="4">
    <location>
        <begin position="797"/>
        <end position="836"/>
    </location>
</feature>
<feature type="region of interest" description="Disordered" evidence="4">
    <location>
        <begin position="897"/>
        <end position="927"/>
    </location>
</feature>
<feature type="compositionally biased region" description="Polar residues" evidence="4">
    <location>
        <begin position="799"/>
        <end position="836"/>
    </location>
</feature>
<feature type="compositionally biased region" description="Basic residues" evidence="4">
    <location>
        <begin position="917"/>
        <end position="927"/>
    </location>
</feature>
<feature type="glycosylation site" description="N-linked (GlcNAc...) asparagine" evidence="2">
    <location>
        <position position="41"/>
    </location>
</feature>
<feature type="glycosylation site" description="N-linked (GlcNAc...) asparagine" evidence="2">
    <location>
        <position position="73"/>
    </location>
</feature>
<feature type="glycosylation site" description="N-linked (GlcNAc...) asparagine" evidence="2">
    <location>
        <position position="300"/>
    </location>
</feature>
<feature type="glycosylation site" description="N-linked (GlcNAc...) asparagine" evidence="2">
    <location>
        <position position="415"/>
    </location>
</feature>
<feature type="glycosylation site" description="N-linked (GlcNAc...) asparagine" evidence="2">
    <location>
        <position position="541"/>
    </location>
</feature>
<organism>
    <name type="scientific">Pan troglodytes</name>
    <name type="common">Chimpanzee</name>
    <dbReference type="NCBI Taxonomy" id="9598"/>
    <lineage>
        <taxon>Eukaryota</taxon>
        <taxon>Metazoa</taxon>
        <taxon>Chordata</taxon>
        <taxon>Craniata</taxon>
        <taxon>Vertebrata</taxon>
        <taxon>Euteleostomi</taxon>
        <taxon>Mammalia</taxon>
        <taxon>Eutheria</taxon>
        <taxon>Euarchontoglires</taxon>
        <taxon>Primates</taxon>
        <taxon>Haplorrhini</taxon>
        <taxon>Catarrhini</taxon>
        <taxon>Hominidae</taxon>
        <taxon>Pan</taxon>
    </lineage>
</organism>